<organism>
    <name type="scientific">Buchnera aphidicola subsp. Baizongia pistaciae (strain Bp)</name>
    <dbReference type="NCBI Taxonomy" id="224915"/>
    <lineage>
        <taxon>Bacteria</taxon>
        <taxon>Pseudomonadati</taxon>
        <taxon>Pseudomonadota</taxon>
        <taxon>Gammaproteobacteria</taxon>
        <taxon>Enterobacterales</taxon>
        <taxon>Erwiniaceae</taxon>
        <taxon>Buchnera</taxon>
    </lineage>
</organism>
<reference key="1">
    <citation type="journal article" date="2003" name="Proc. Natl. Acad. Sci. U.S.A.">
        <title>Reductive genome evolution in Buchnera aphidicola.</title>
        <authorList>
            <person name="van Ham R.C.H.J."/>
            <person name="Kamerbeek J."/>
            <person name="Palacios C."/>
            <person name="Rausell C."/>
            <person name="Abascal F."/>
            <person name="Bastolla U."/>
            <person name="Fernandez J.M."/>
            <person name="Jimenez L."/>
            <person name="Postigo M."/>
            <person name="Silva F.J."/>
            <person name="Tamames J."/>
            <person name="Viguera E."/>
            <person name="Latorre A."/>
            <person name="Valencia A."/>
            <person name="Moran F."/>
            <person name="Moya A."/>
        </authorList>
    </citation>
    <scope>NUCLEOTIDE SEQUENCE [LARGE SCALE GENOMIC DNA]</scope>
    <source>
        <strain>Bp</strain>
    </source>
</reference>
<comment type="function">
    <text evidence="1">Specifically methylates guanosine-37 in various tRNAs.</text>
</comment>
<comment type="catalytic activity">
    <reaction evidence="1">
        <text>guanosine(37) in tRNA + S-adenosyl-L-methionine = N(1)-methylguanosine(37) in tRNA + S-adenosyl-L-homocysteine + H(+)</text>
        <dbReference type="Rhea" id="RHEA:36899"/>
        <dbReference type="Rhea" id="RHEA-COMP:10145"/>
        <dbReference type="Rhea" id="RHEA-COMP:10147"/>
        <dbReference type="ChEBI" id="CHEBI:15378"/>
        <dbReference type="ChEBI" id="CHEBI:57856"/>
        <dbReference type="ChEBI" id="CHEBI:59789"/>
        <dbReference type="ChEBI" id="CHEBI:73542"/>
        <dbReference type="ChEBI" id="CHEBI:74269"/>
        <dbReference type="EC" id="2.1.1.228"/>
    </reaction>
</comment>
<comment type="subunit">
    <text evidence="1">Homodimer.</text>
</comment>
<comment type="subcellular location">
    <subcellularLocation>
        <location evidence="1">Cytoplasm</location>
    </subcellularLocation>
</comment>
<comment type="similarity">
    <text evidence="1">Belongs to the RNA methyltransferase TrmD family.</text>
</comment>
<name>TRMD_BUCBP</name>
<protein>
    <recommendedName>
        <fullName evidence="1">tRNA (guanine-N(1)-)-methyltransferase</fullName>
        <ecNumber evidence="1">2.1.1.228</ecNumber>
    </recommendedName>
    <alternativeName>
        <fullName evidence="1">M1G-methyltransferase</fullName>
    </alternativeName>
    <alternativeName>
        <fullName evidence="1">tRNA [GM37] methyltransferase</fullName>
    </alternativeName>
</protein>
<evidence type="ECO:0000255" key="1">
    <source>
        <dbReference type="HAMAP-Rule" id="MF_00605"/>
    </source>
</evidence>
<gene>
    <name evidence="1" type="primary">trmD</name>
    <name type="ordered locus">bbp_359</name>
</gene>
<keyword id="KW-0963">Cytoplasm</keyword>
<keyword id="KW-0489">Methyltransferase</keyword>
<keyword id="KW-1185">Reference proteome</keyword>
<keyword id="KW-0949">S-adenosyl-L-methionine</keyword>
<keyword id="KW-0808">Transferase</keyword>
<keyword id="KW-0819">tRNA processing</keyword>
<proteinExistence type="inferred from homology"/>
<sequence>MLINVISIFPKMFDIIKDYGITKRAIQKHLVKINVLNPRKFTKNKYKNIDDRPYGGGPGMIMTAEPLFLAINQAKSLSSNPVKVFYLSPQGKKLDQSKIMELSHQKHIILLCGRYEGIDERLLISKIIDEEISIGDYVLSGGELPAMVLIDSICRVTPGVLKNSKAIQEDSFYNGLLDYPHYTRPKCFNCIKIPNILLSGNHSEIKRWRLKQSLTKTWLKRPDLLNKLILTKEQESILHECQSKMDKPKI</sequence>
<feature type="chain" id="PRO_0000060346" description="tRNA (guanine-N(1)-)-methyltransferase">
    <location>
        <begin position="1"/>
        <end position="250"/>
    </location>
</feature>
<feature type="binding site" evidence="1">
    <location>
        <position position="113"/>
    </location>
    <ligand>
        <name>S-adenosyl-L-methionine</name>
        <dbReference type="ChEBI" id="CHEBI:59789"/>
    </ligand>
</feature>
<feature type="binding site" evidence="1">
    <location>
        <begin position="134"/>
        <end position="139"/>
    </location>
    <ligand>
        <name>S-adenosyl-L-methionine</name>
        <dbReference type="ChEBI" id="CHEBI:59789"/>
    </ligand>
</feature>
<accession>P59518</accession>
<dbReference type="EC" id="2.1.1.228" evidence="1"/>
<dbReference type="EMBL" id="AE016826">
    <property type="protein sequence ID" value="AAO27078.1"/>
    <property type="molecule type" value="Genomic_DNA"/>
</dbReference>
<dbReference type="RefSeq" id="WP_011091479.1">
    <property type="nucleotide sequence ID" value="NC_004545.1"/>
</dbReference>
<dbReference type="SMR" id="P59518"/>
<dbReference type="STRING" id="224915.bbp_359"/>
<dbReference type="KEGG" id="bab:bbp_359"/>
<dbReference type="eggNOG" id="COG0336">
    <property type="taxonomic scope" value="Bacteria"/>
</dbReference>
<dbReference type="HOGENOM" id="CLU_047363_0_1_6"/>
<dbReference type="OrthoDB" id="9807416at2"/>
<dbReference type="Proteomes" id="UP000000601">
    <property type="component" value="Chromosome"/>
</dbReference>
<dbReference type="GO" id="GO:0005829">
    <property type="term" value="C:cytosol"/>
    <property type="evidence" value="ECO:0007669"/>
    <property type="project" value="TreeGrafter"/>
</dbReference>
<dbReference type="GO" id="GO:0052906">
    <property type="term" value="F:tRNA (guanine(37)-N1)-methyltransferase activity"/>
    <property type="evidence" value="ECO:0007669"/>
    <property type="project" value="UniProtKB-UniRule"/>
</dbReference>
<dbReference type="GO" id="GO:0002939">
    <property type="term" value="P:tRNA N1-guanine methylation"/>
    <property type="evidence" value="ECO:0007669"/>
    <property type="project" value="TreeGrafter"/>
</dbReference>
<dbReference type="CDD" id="cd18080">
    <property type="entry name" value="TrmD-like"/>
    <property type="match status" value="1"/>
</dbReference>
<dbReference type="FunFam" id="1.10.1270.20:FF:000001">
    <property type="entry name" value="tRNA (guanine-N(1)-)-methyltransferase"/>
    <property type="match status" value="1"/>
</dbReference>
<dbReference type="FunFam" id="3.40.1280.10:FF:000001">
    <property type="entry name" value="tRNA (guanine-N(1)-)-methyltransferase"/>
    <property type="match status" value="1"/>
</dbReference>
<dbReference type="Gene3D" id="3.40.1280.10">
    <property type="match status" value="1"/>
</dbReference>
<dbReference type="Gene3D" id="1.10.1270.20">
    <property type="entry name" value="tRNA(m1g37)methyltransferase, domain 2"/>
    <property type="match status" value="1"/>
</dbReference>
<dbReference type="HAMAP" id="MF_00605">
    <property type="entry name" value="TrmD"/>
    <property type="match status" value="1"/>
</dbReference>
<dbReference type="InterPro" id="IPR029028">
    <property type="entry name" value="Alpha/beta_knot_MTases"/>
</dbReference>
<dbReference type="InterPro" id="IPR023148">
    <property type="entry name" value="tRNA_m1G_MeTrfase_C_sf"/>
</dbReference>
<dbReference type="InterPro" id="IPR002649">
    <property type="entry name" value="tRNA_m1G_MeTrfase_TrmD"/>
</dbReference>
<dbReference type="InterPro" id="IPR029026">
    <property type="entry name" value="tRNA_m1G_MTases_N"/>
</dbReference>
<dbReference type="InterPro" id="IPR016009">
    <property type="entry name" value="tRNA_MeTrfase_TRMD/TRM10"/>
</dbReference>
<dbReference type="NCBIfam" id="NF000648">
    <property type="entry name" value="PRK00026.1"/>
    <property type="match status" value="1"/>
</dbReference>
<dbReference type="NCBIfam" id="TIGR00088">
    <property type="entry name" value="trmD"/>
    <property type="match status" value="1"/>
</dbReference>
<dbReference type="PANTHER" id="PTHR46417">
    <property type="entry name" value="TRNA (GUANINE-N(1)-)-METHYLTRANSFERASE"/>
    <property type="match status" value="1"/>
</dbReference>
<dbReference type="PANTHER" id="PTHR46417:SF1">
    <property type="entry name" value="TRNA (GUANINE-N(1)-)-METHYLTRANSFERASE"/>
    <property type="match status" value="1"/>
</dbReference>
<dbReference type="Pfam" id="PF01746">
    <property type="entry name" value="tRNA_m1G_MT"/>
    <property type="match status" value="1"/>
</dbReference>
<dbReference type="PIRSF" id="PIRSF000386">
    <property type="entry name" value="tRNA_mtase"/>
    <property type="match status" value="1"/>
</dbReference>
<dbReference type="SUPFAM" id="SSF75217">
    <property type="entry name" value="alpha/beta knot"/>
    <property type="match status" value="1"/>
</dbReference>